<accession>Q24857</accession>
<accession>A0A175JI85</accession>
<accession>C4LWS2</accession>
<accession>Q94560</accession>
<accession>S0AY46</accession>
<comment type="function">
    <text evidence="1">Has NADP-dependent alcohol dehydrogenase activity.</text>
</comment>
<comment type="catalytic activity">
    <reaction evidence="1">
        <text>a primary alcohol + NADP(+) = an aldehyde + NADPH + H(+)</text>
        <dbReference type="Rhea" id="RHEA:15937"/>
        <dbReference type="ChEBI" id="CHEBI:15378"/>
        <dbReference type="ChEBI" id="CHEBI:15734"/>
        <dbReference type="ChEBI" id="CHEBI:17478"/>
        <dbReference type="ChEBI" id="CHEBI:57783"/>
        <dbReference type="ChEBI" id="CHEBI:58349"/>
        <dbReference type="EC" id="1.1.1.2"/>
    </reaction>
</comment>
<comment type="similarity">
    <text evidence="4">Belongs to the iron-containing alcohol dehydrogenase family.</text>
</comment>
<dbReference type="EC" id="1.1.1.2" evidence="1"/>
<dbReference type="EMBL" id="D49910">
    <property type="protein sequence ID" value="BAA08651.1"/>
    <property type="molecule type" value="mRNA"/>
</dbReference>
<dbReference type="EMBL" id="Z48752">
    <property type="protein sequence ID" value="CAA88639.1"/>
    <property type="molecule type" value="Genomic_DNA"/>
</dbReference>
<dbReference type="EMBL" id="DS571165">
    <property type="protein sequence ID" value="EAL49788.1"/>
    <property type="molecule type" value="Genomic_DNA"/>
</dbReference>
<dbReference type="EMBL" id="AK421586">
    <property type="protein sequence ID" value="BAN40121.1"/>
    <property type="molecule type" value="mRNA"/>
</dbReference>
<dbReference type="EMBL" id="AK421060">
    <property type="protein sequence ID" value="BAN39633.1"/>
    <property type="molecule type" value="mRNA"/>
</dbReference>
<dbReference type="EMBL" id="AK419479">
    <property type="protein sequence ID" value="BAN38157.1"/>
    <property type="molecule type" value="mRNA"/>
</dbReference>
<dbReference type="EMBL" id="AK418712">
    <property type="protein sequence ID" value="BAN37462.1"/>
    <property type="molecule type" value="mRNA"/>
</dbReference>
<dbReference type="EMBL" id="AK418747">
    <property type="protein sequence ID" value="BAN37496.1"/>
    <property type="molecule type" value="mRNA"/>
</dbReference>
<dbReference type="EMBL" id="AK418769">
    <property type="protein sequence ID" value="BAN37517.1"/>
    <property type="molecule type" value="mRNA"/>
</dbReference>
<dbReference type="EMBL" id="AK418926">
    <property type="protein sequence ID" value="BAN37657.1"/>
    <property type="molecule type" value="mRNA"/>
</dbReference>
<dbReference type="EMBL" id="AK418935">
    <property type="protein sequence ID" value="BAN37666.1"/>
    <property type="molecule type" value="mRNA"/>
</dbReference>
<dbReference type="EMBL" id="AK419143">
    <property type="protein sequence ID" value="BAN37851.1"/>
    <property type="molecule type" value="mRNA"/>
</dbReference>
<dbReference type="EMBL" id="AK419305">
    <property type="protein sequence ID" value="BAN37995.1"/>
    <property type="molecule type" value="mRNA"/>
</dbReference>
<dbReference type="EMBL" id="AK419329">
    <property type="protein sequence ID" value="BAN38018.1"/>
    <property type="molecule type" value="mRNA"/>
</dbReference>
<dbReference type="EMBL" id="AK419585">
    <property type="protein sequence ID" value="BAN38250.1"/>
    <property type="molecule type" value="mRNA"/>
</dbReference>
<dbReference type="EMBL" id="AK419738">
    <property type="protein sequence ID" value="BAN38390.1"/>
    <property type="molecule type" value="mRNA"/>
</dbReference>
<dbReference type="EMBL" id="AK420073">
    <property type="protein sequence ID" value="BAN38702.1"/>
    <property type="molecule type" value="mRNA"/>
</dbReference>
<dbReference type="EMBL" id="AK420398">
    <property type="protein sequence ID" value="BAN39011.1"/>
    <property type="molecule type" value="mRNA"/>
</dbReference>
<dbReference type="EMBL" id="AK420221">
    <property type="protein sequence ID" value="BAN38843.1"/>
    <property type="molecule type" value="mRNA"/>
</dbReference>
<dbReference type="EMBL" id="AK420399">
    <property type="protein sequence ID" value="BAN39012.1"/>
    <property type="molecule type" value="mRNA"/>
</dbReference>
<dbReference type="EMBL" id="AK420502">
    <property type="protein sequence ID" value="BAN39110.1"/>
    <property type="molecule type" value="mRNA"/>
</dbReference>
<dbReference type="EMBL" id="AK420541">
    <property type="protein sequence ID" value="BAN39148.1"/>
    <property type="molecule type" value="mRNA"/>
</dbReference>
<dbReference type="EMBL" id="AK420544">
    <property type="protein sequence ID" value="BAN39151.1"/>
    <property type="molecule type" value="mRNA"/>
</dbReference>
<dbReference type="EMBL" id="AK420563">
    <property type="protein sequence ID" value="BAN39168.1"/>
    <property type="molecule type" value="mRNA"/>
</dbReference>
<dbReference type="EMBL" id="AK420639">
    <property type="protein sequence ID" value="BAN39236.1"/>
    <property type="molecule type" value="mRNA"/>
</dbReference>
<dbReference type="EMBL" id="AK420747">
    <property type="protein sequence ID" value="BAN39336.1"/>
    <property type="molecule type" value="mRNA"/>
</dbReference>
<dbReference type="EMBL" id="AK421244">
    <property type="protein sequence ID" value="BAN39806.1"/>
    <property type="molecule type" value="mRNA"/>
</dbReference>
<dbReference type="EMBL" id="AK421457">
    <property type="protein sequence ID" value="BAN40009.1"/>
    <property type="molecule type" value="mRNA"/>
</dbReference>
<dbReference type="EMBL" id="AK421482">
    <property type="protein sequence ID" value="BAN40032.1"/>
    <property type="molecule type" value="mRNA"/>
</dbReference>
<dbReference type="PIR" id="S68143">
    <property type="entry name" value="S68143"/>
</dbReference>
<dbReference type="RefSeq" id="XP_655172.1">
    <property type="nucleotide sequence ID" value="XM_650080.1"/>
</dbReference>
<dbReference type="SMR" id="Q24857"/>
<dbReference type="STRING" id="5759.C4LWS2"/>
<dbReference type="EnsemblProtists" id="GAT93164">
    <property type="protein sequence ID" value="GAT93164"/>
    <property type="gene ID" value="CL6EHI_198760"/>
</dbReference>
<dbReference type="EnsemblProtists" id="rna_EHI_198760-1">
    <property type="protein sequence ID" value="rna_EHI_198760-1"/>
    <property type="gene ID" value="EHI_198760"/>
</dbReference>
<dbReference type="GeneID" id="3409490"/>
<dbReference type="KEGG" id="ehi:EHI_198760"/>
<dbReference type="VEuPathDB" id="AmoebaDB:EHI5A_080760"/>
<dbReference type="VEuPathDB" id="AmoebaDB:EHI7A_179020"/>
<dbReference type="VEuPathDB" id="AmoebaDB:EHI8A_076400"/>
<dbReference type="VEuPathDB" id="AmoebaDB:EHI_198760"/>
<dbReference type="VEuPathDB" id="AmoebaDB:KM1_213790"/>
<dbReference type="eggNOG" id="KOG3857">
    <property type="taxonomic scope" value="Eukaryota"/>
</dbReference>
<dbReference type="HOGENOM" id="CLU_007207_0_4_1"/>
<dbReference type="OMA" id="HVLEQYM"/>
<dbReference type="OrthoDB" id="339764at2759"/>
<dbReference type="Proteomes" id="UP000001926">
    <property type="component" value="Partially assembled WGS sequence"/>
</dbReference>
<dbReference type="GO" id="GO:0008106">
    <property type="term" value="F:alcohol dehydrogenase (NADP+) activity"/>
    <property type="evidence" value="ECO:0007669"/>
    <property type="project" value="UniProtKB-EC"/>
</dbReference>
<dbReference type="GO" id="GO:1990362">
    <property type="term" value="F:butanol dehydrogenase (NAD+) activity"/>
    <property type="evidence" value="ECO:0007669"/>
    <property type="project" value="InterPro"/>
</dbReference>
<dbReference type="GO" id="GO:0046872">
    <property type="term" value="F:metal ion binding"/>
    <property type="evidence" value="ECO:0007669"/>
    <property type="project" value="InterPro"/>
</dbReference>
<dbReference type="CDD" id="cd08187">
    <property type="entry name" value="BDH"/>
    <property type="match status" value="1"/>
</dbReference>
<dbReference type="FunFam" id="3.40.50.1970:FF:000003">
    <property type="entry name" value="Alcohol dehydrogenase, iron-containing"/>
    <property type="match status" value="1"/>
</dbReference>
<dbReference type="Gene3D" id="3.40.50.1970">
    <property type="match status" value="1"/>
</dbReference>
<dbReference type="Gene3D" id="1.20.1090.10">
    <property type="entry name" value="Dehydroquinate synthase-like - alpha domain"/>
    <property type="match status" value="1"/>
</dbReference>
<dbReference type="InterPro" id="IPR001670">
    <property type="entry name" value="ADH_Fe/GldA"/>
</dbReference>
<dbReference type="InterPro" id="IPR056798">
    <property type="entry name" value="ADH_Fe_C"/>
</dbReference>
<dbReference type="InterPro" id="IPR018211">
    <property type="entry name" value="ADH_Fe_CS"/>
</dbReference>
<dbReference type="InterPro" id="IPR044731">
    <property type="entry name" value="BDH-like"/>
</dbReference>
<dbReference type="PANTHER" id="PTHR43633">
    <property type="entry name" value="ALCOHOL DEHYDROGENASE YQHD"/>
    <property type="match status" value="1"/>
</dbReference>
<dbReference type="PANTHER" id="PTHR43633:SF1">
    <property type="entry name" value="ALCOHOL DEHYDROGENASE YQHD"/>
    <property type="match status" value="1"/>
</dbReference>
<dbReference type="Pfam" id="PF25137">
    <property type="entry name" value="ADH_Fe_C"/>
    <property type="match status" value="1"/>
</dbReference>
<dbReference type="Pfam" id="PF00465">
    <property type="entry name" value="Fe-ADH"/>
    <property type="match status" value="1"/>
</dbReference>
<dbReference type="SUPFAM" id="SSF56796">
    <property type="entry name" value="Dehydroquinate synthase-like"/>
    <property type="match status" value="1"/>
</dbReference>
<dbReference type="PROSITE" id="PS00060">
    <property type="entry name" value="ADH_IRON_2"/>
    <property type="match status" value="1"/>
</dbReference>
<organism evidence="5">
    <name type="scientific">Entamoeba histolytica (strain ATCC 30459 / HM-1:IMSS / ABRM)</name>
    <dbReference type="NCBI Taxonomy" id="294381"/>
    <lineage>
        <taxon>Eukaryota</taxon>
        <taxon>Amoebozoa</taxon>
        <taxon>Evosea</taxon>
        <taxon>Archamoebae</taxon>
        <taxon>Mastigamoebida</taxon>
        <taxon>Entamoebidae</taxon>
        <taxon>Entamoeba</taxon>
    </lineage>
</organism>
<evidence type="ECO:0000269" key="1">
    <source>
    </source>
</evidence>
<evidence type="ECO:0000303" key="2">
    <source>
    </source>
</evidence>
<evidence type="ECO:0000303" key="3">
    <source>
    </source>
</evidence>
<evidence type="ECO:0000305" key="4"/>
<evidence type="ECO:0000312" key="5">
    <source>
        <dbReference type="EMBL" id="BAA08651.1"/>
    </source>
</evidence>
<evidence type="ECO:0000312" key="6">
    <source>
        <dbReference type="EMBL" id="BAN39151.1"/>
    </source>
</evidence>
<evidence type="ECO:0000312" key="7">
    <source>
        <dbReference type="EMBL" id="CAA88639.1"/>
    </source>
</evidence>
<evidence type="ECO:0000312" key="8">
    <source>
        <dbReference type="EMBL" id="EAL49788.1"/>
    </source>
</evidence>
<sequence>MTMLNFTYYNPVRLIYGKGSLDEIEKQHLIPEDARIMMTYGGGSIKKNGVYEEVLKHIKPIVEFGGIEPNPSHETCIKAIKIAKENKINFLVAVGGGSIIDATKYIALGMEHTYSDDPYDICLKGGKFKVNPAQAKIGVVLTIPATGSETNCWGVISRHADKLKLPFNNESVFPTWSIVDPCFTMSLPDNQIRNGLVDSFVHCIEQYIGNYHLNPVVEAETEGVMRTIIGVSHKTLENHQDYQARITFCYAATVALNMSLLCGVTLCGGAHAVGHELTSYYGLAHGETLAITTPGVMRFNKEKNAKKLIQMGEQVFGIKNSTPEAAIEATEKWFKSIGMKTRLSEWGKGKEEFETIARKFEGNPAGAHKDIDYKGCLQILNDIY</sequence>
<proteinExistence type="evidence at protein level"/>
<keyword id="KW-0521">NADP</keyword>
<keyword id="KW-0560">Oxidoreductase</keyword>
<keyword id="KW-1185">Reference proteome</keyword>
<gene>
    <name evidence="2" type="primary">ADH3</name>
    <name evidence="8" type="ORF">EHI_198760</name>
</gene>
<protein>
    <recommendedName>
        <fullName evidence="2">NADP-dependent alcohol dehydrogenase 3</fullName>
        <shortName evidence="3">ADH</shortName>
        <ecNumber evidence="1">1.1.1.2</ecNumber>
    </recommendedName>
</protein>
<feature type="chain" id="PRO_0000087836" description="NADP-dependent alcohol dehydrogenase 3">
    <location>
        <begin position="1"/>
        <end position="384"/>
    </location>
</feature>
<feature type="sequence conflict" description="In Ref. 2; CAA88639." evidence="4" ref="2">
    <original>R</original>
    <variation>I</variation>
    <location>
        <position position="193"/>
    </location>
</feature>
<feature type="sequence conflict" description="In Ref. 2; CAA88639." evidence="4" ref="2">
    <original>TLENHQDY</original>
    <variation>HKKIIKTI</variation>
    <location>
        <begin position="235"/>
        <end position="242"/>
    </location>
</feature>
<feature type="sequence conflict" description="In Ref. 1; BAA08651." evidence="4" ref="1">
    <original>C</original>
    <variation>CGVTLCGGAHAV</variation>
    <location>
        <position position="262"/>
    </location>
</feature>
<feature type="sequence conflict" description="In Ref. 2; CAA88639." evidence="4" ref="2">
    <original>VMR</original>
    <variation>NE</variation>
    <location>
        <begin position="296"/>
        <end position="298"/>
    </location>
</feature>
<reference evidence="5" key="1">
    <citation type="journal article" date="1996" name="Clin. Diagn. Lab. Immunol.">
        <title>Cloning and expression of a putative alcohol dehydrogenase gene of Entamoeba histolytica and its application to immunological examination.</title>
        <authorList>
            <person name="Kimura A."/>
            <person name="Hara Y."/>
            <person name="Kimoto T."/>
            <person name="Okuno Y."/>
            <person name="Minekawa Y."/>
            <person name="Nakabayashi T."/>
        </authorList>
    </citation>
    <scope>NUCLEOTIDE SEQUENCE [MRNA]</scope>
    <source>
        <strain evidence="5">ATCC 30459 / HM-1:IMSS / ABRM</strain>
    </source>
</reference>
<reference evidence="7" key="2">
    <citation type="journal article" date="1996" name="Biochim. Biophys. Acta">
        <title>Cloning and expression of an Entamoeba histolytica NADP+(-)dependent alcohol dehydrogenase gene.</title>
        <authorList>
            <person name="Rodriguez M.A."/>
            <person name="Baez-Camargo M."/>
            <person name="Delgadillo D.M."/>
            <person name="Orozco E."/>
        </authorList>
    </citation>
    <scope>NUCLEOTIDE SEQUENCE [GENOMIC DNA]</scope>
    <scope>FUNCTION</scope>
    <scope>CATALYTIC ACTIVITY</scope>
    <source>
        <strain evidence="7">ATCC 30459 / HM-1:IMSS / ABRM</strain>
    </source>
</reference>
<reference evidence="8" key="3">
    <citation type="journal article" date="2005" name="Nature">
        <title>The genome of the protist parasite Entamoeba histolytica.</title>
        <authorList>
            <person name="Loftus B.J."/>
            <person name="Anderson I."/>
            <person name="Davies R."/>
            <person name="Alsmark U.C."/>
            <person name="Samuelson J."/>
            <person name="Amedeo P."/>
            <person name="Roncaglia P."/>
            <person name="Berriman M."/>
            <person name="Hirt R.P."/>
            <person name="Mann B.J."/>
            <person name="Nozaki T."/>
            <person name="Suh B."/>
            <person name="Pop M."/>
            <person name="Duchene M."/>
            <person name="Ackers J."/>
            <person name="Tannich E."/>
            <person name="Leippe M."/>
            <person name="Hofer M."/>
            <person name="Bruchhaus I."/>
            <person name="Willhoeft U."/>
            <person name="Bhattacharya A."/>
            <person name="Chillingworth T."/>
            <person name="Churcher C.M."/>
            <person name="Hance Z."/>
            <person name="Harris B."/>
            <person name="Harris D."/>
            <person name="Jagels K."/>
            <person name="Moule S."/>
            <person name="Mungall K.L."/>
            <person name="Ormond D."/>
            <person name="Squares R."/>
            <person name="Whitehead S."/>
            <person name="Quail M.A."/>
            <person name="Rabbinowitsch E."/>
            <person name="Norbertczak H."/>
            <person name="Price C."/>
            <person name="Wang Z."/>
            <person name="Guillen N."/>
            <person name="Gilchrist C."/>
            <person name="Stroup S.E."/>
            <person name="Bhattacharya S."/>
            <person name="Lohia A."/>
            <person name="Foster P.G."/>
            <person name="Sicheritz-Ponten T."/>
            <person name="Weber C."/>
            <person name="Singh U."/>
            <person name="Mukherjee C."/>
            <person name="El-Sayed N.M.A."/>
            <person name="Petri W.A."/>
            <person name="Clark C.G."/>
            <person name="Embley T.M."/>
            <person name="Barrell B.G."/>
            <person name="Fraser C.M."/>
            <person name="Hall N."/>
        </authorList>
    </citation>
    <scope>NUCLEOTIDE SEQUENCE [LARGE SCALE GENOMIC DNA]</scope>
    <source>
        <strain evidence="8">ATCC 30459 / HM-1:IMSS / ABRM</strain>
    </source>
</reference>
<reference evidence="6" key="4">
    <citation type="submission" date="2012-06" db="EMBL/GenBank/DDBJ databases">
        <title>Short 5' UTR of Entamoeba genes.</title>
        <authorList>
            <person name="Hiranuka K."/>
            <person name="Kumagai M."/>
            <person name="Wakaguri H."/>
            <person name="Suzuki Y."/>
            <person name="Sugano S."/>
            <person name="Watanabe J."/>
            <person name="Makioka A."/>
        </authorList>
    </citation>
    <scope>NUCLEOTIDE SEQUENCE [MRNA]</scope>
    <source>
        <strain evidence="6">ATCC 30459 / HM-1:IMSS / ABRM</strain>
    </source>
</reference>
<name>ADH3_ENTH1</name>